<protein>
    <recommendedName>
        <fullName evidence="1">UDP-N-acetylglucosamine--N-acetylmuramyl-(pentapeptide) pyrophosphoryl-undecaprenol N-acetylglucosamine transferase</fullName>
        <ecNumber evidence="1">2.4.1.227</ecNumber>
    </recommendedName>
    <alternativeName>
        <fullName evidence="1">Undecaprenyl-PP-MurNAc-pentapeptide-UDPGlcNAc GlcNAc transferase</fullName>
    </alternativeName>
</protein>
<feature type="chain" id="PRO_1000090453" description="UDP-N-acetylglucosamine--N-acetylmuramyl-(pentapeptide) pyrophosphoryl-undecaprenol N-acetylglucosamine transferase">
    <location>
        <begin position="1"/>
        <end position="355"/>
    </location>
</feature>
<feature type="binding site" evidence="1">
    <location>
        <begin position="13"/>
        <end position="15"/>
    </location>
    <ligand>
        <name>UDP-N-acetyl-alpha-D-glucosamine</name>
        <dbReference type="ChEBI" id="CHEBI:57705"/>
    </ligand>
</feature>
<feature type="binding site" evidence="1">
    <location>
        <position position="125"/>
    </location>
    <ligand>
        <name>UDP-N-acetyl-alpha-D-glucosamine</name>
        <dbReference type="ChEBI" id="CHEBI:57705"/>
    </ligand>
</feature>
<feature type="binding site" evidence="1">
    <location>
        <position position="162"/>
    </location>
    <ligand>
        <name>UDP-N-acetyl-alpha-D-glucosamine</name>
        <dbReference type="ChEBI" id="CHEBI:57705"/>
    </ligand>
</feature>
<feature type="binding site" evidence="1">
    <location>
        <position position="190"/>
    </location>
    <ligand>
        <name>UDP-N-acetyl-alpha-D-glucosamine</name>
        <dbReference type="ChEBI" id="CHEBI:57705"/>
    </ligand>
</feature>
<feature type="binding site" evidence="1">
    <location>
        <position position="244"/>
    </location>
    <ligand>
        <name>UDP-N-acetyl-alpha-D-glucosamine</name>
        <dbReference type="ChEBI" id="CHEBI:57705"/>
    </ligand>
</feature>
<feature type="binding site" evidence="1">
    <location>
        <position position="289"/>
    </location>
    <ligand>
        <name>UDP-N-acetyl-alpha-D-glucosamine</name>
        <dbReference type="ChEBI" id="CHEBI:57705"/>
    </ligand>
</feature>
<comment type="function">
    <text evidence="1">Cell wall formation. Catalyzes the transfer of a GlcNAc subunit on undecaprenyl-pyrophosphoryl-MurNAc-pentapeptide (lipid intermediate I) to form undecaprenyl-pyrophosphoryl-MurNAc-(pentapeptide)GlcNAc (lipid intermediate II).</text>
</comment>
<comment type="catalytic activity">
    <reaction evidence="1">
        <text>di-trans,octa-cis-undecaprenyl diphospho-N-acetyl-alpha-D-muramoyl-L-alanyl-D-glutamyl-meso-2,6-diaminopimeloyl-D-alanyl-D-alanine + UDP-N-acetyl-alpha-D-glucosamine = di-trans,octa-cis-undecaprenyl diphospho-[N-acetyl-alpha-D-glucosaminyl-(1-&gt;4)]-N-acetyl-alpha-D-muramoyl-L-alanyl-D-glutamyl-meso-2,6-diaminopimeloyl-D-alanyl-D-alanine + UDP + H(+)</text>
        <dbReference type="Rhea" id="RHEA:31227"/>
        <dbReference type="ChEBI" id="CHEBI:15378"/>
        <dbReference type="ChEBI" id="CHEBI:57705"/>
        <dbReference type="ChEBI" id="CHEBI:58223"/>
        <dbReference type="ChEBI" id="CHEBI:61387"/>
        <dbReference type="ChEBI" id="CHEBI:61388"/>
        <dbReference type="EC" id="2.4.1.227"/>
    </reaction>
</comment>
<comment type="pathway">
    <text evidence="1">Cell wall biogenesis; peptidoglycan biosynthesis.</text>
</comment>
<comment type="subcellular location">
    <subcellularLocation>
        <location evidence="1">Cell inner membrane</location>
        <topology evidence="1">Peripheral membrane protein</topology>
        <orientation evidence="1">Cytoplasmic side</orientation>
    </subcellularLocation>
</comment>
<comment type="similarity">
    <text evidence="1">Belongs to the glycosyltransferase 28 family. MurG subfamily.</text>
</comment>
<keyword id="KW-0131">Cell cycle</keyword>
<keyword id="KW-0132">Cell division</keyword>
<keyword id="KW-0997">Cell inner membrane</keyword>
<keyword id="KW-1003">Cell membrane</keyword>
<keyword id="KW-0133">Cell shape</keyword>
<keyword id="KW-0961">Cell wall biogenesis/degradation</keyword>
<keyword id="KW-0328">Glycosyltransferase</keyword>
<keyword id="KW-0472">Membrane</keyword>
<keyword id="KW-0573">Peptidoglycan synthesis</keyword>
<keyword id="KW-0808">Transferase</keyword>
<proteinExistence type="inferred from homology"/>
<reference key="1">
    <citation type="journal article" date="2008" name="J. Bacteriol.">
        <title>Complete genome sequence of Neisseria gonorrhoeae NCCP11945.</title>
        <authorList>
            <person name="Chung G.T."/>
            <person name="Yoo J.S."/>
            <person name="Oh H.B."/>
            <person name="Lee Y.S."/>
            <person name="Cha S.H."/>
            <person name="Kim S.J."/>
            <person name="Yoo C.K."/>
        </authorList>
    </citation>
    <scope>NUCLEOTIDE SEQUENCE [LARGE SCALE GENOMIC DNA]</scope>
    <source>
        <strain>NCCP11945</strain>
    </source>
</reference>
<dbReference type="EC" id="2.4.1.227" evidence="1"/>
<dbReference type="EMBL" id="CP001050">
    <property type="protein sequence ID" value="ACF30461.1"/>
    <property type="molecule type" value="Genomic_DNA"/>
</dbReference>
<dbReference type="RefSeq" id="WP_003689443.1">
    <property type="nucleotide sequence ID" value="NC_011035.1"/>
</dbReference>
<dbReference type="SMR" id="B4RQC5"/>
<dbReference type="CAZy" id="GT28">
    <property type="family name" value="Glycosyltransferase Family 28"/>
</dbReference>
<dbReference type="GeneID" id="66753739"/>
<dbReference type="KEGG" id="ngk:NGK_1822"/>
<dbReference type="HOGENOM" id="CLU_037404_2_0_4"/>
<dbReference type="UniPathway" id="UPA00219"/>
<dbReference type="Proteomes" id="UP000002564">
    <property type="component" value="Chromosome"/>
</dbReference>
<dbReference type="GO" id="GO:0005886">
    <property type="term" value="C:plasma membrane"/>
    <property type="evidence" value="ECO:0007669"/>
    <property type="project" value="UniProtKB-SubCell"/>
</dbReference>
<dbReference type="GO" id="GO:0051991">
    <property type="term" value="F:UDP-N-acetyl-D-glucosamine:N-acetylmuramoyl-L-alanyl-D-glutamyl-meso-2,6-diaminopimelyl-D-alanyl-D-alanine-diphosphoundecaprenol 4-beta-N-acetylglucosaminlytransferase activity"/>
    <property type="evidence" value="ECO:0007669"/>
    <property type="project" value="RHEA"/>
</dbReference>
<dbReference type="GO" id="GO:0050511">
    <property type="term" value="F:undecaprenyldiphospho-muramoylpentapeptide beta-N-acetylglucosaminyltransferase activity"/>
    <property type="evidence" value="ECO:0007669"/>
    <property type="project" value="UniProtKB-UniRule"/>
</dbReference>
<dbReference type="GO" id="GO:0005975">
    <property type="term" value="P:carbohydrate metabolic process"/>
    <property type="evidence" value="ECO:0007669"/>
    <property type="project" value="InterPro"/>
</dbReference>
<dbReference type="GO" id="GO:0051301">
    <property type="term" value="P:cell division"/>
    <property type="evidence" value="ECO:0007669"/>
    <property type="project" value="UniProtKB-KW"/>
</dbReference>
<dbReference type="GO" id="GO:0071555">
    <property type="term" value="P:cell wall organization"/>
    <property type="evidence" value="ECO:0007669"/>
    <property type="project" value="UniProtKB-KW"/>
</dbReference>
<dbReference type="GO" id="GO:0030259">
    <property type="term" value="P:lipid glycosylation"/>
    <property type="evidence" value="ECO:0007669"/>
    <property type="project" value="UniProtKB-UniRule"/>
</dbReference>
<dbReference type="GO" id="GO:0009252">
    <property type="term" value="P:peptidoglycan biosynthetic process"/>
    <property type="evidence" value="ECO:0007669"/>
    <property type="project" value="UniProtKB-UniRule"/>
</dbReference>
<dbReference type="GO" id="GO:0008360">
    <property type="term" value="P:regulation of cell shape"/>
    <property type="evidence" value="ECO:0007669"/>
    <property type="project" value="UniProtKB-KW"/>
</dbReference>
<dbReference type="CDD" id="cd03785">
    <property type="entry name" value="GT28_MurG"/>
    <property type="match status" value="1"/>
</dbReference>
<dbReference type="Gene3D" id="3.40.50.2000">
    <property type="entry name" value="Glycogen Phosphorylase B"/>
    <property type="match status" value="2"/>
</dbReference>
<dbReference type="HAMAP" id="MF_00033">
    <property type="entry name" value="MurG"/>
    <property type="match status" value="1"/>
</dbReference>
<dbReference type="InterPro" id="IPR006009">
    <property type="entry name" value="GlcNAc_MurG"/>
</dbReference>
<dbReference type="InterPro" id="IPR007235">
    <property type="entry name" value="Glyco_trans_28_C"/>
</dbReference>
<dbReference type="InterPro" id="IPR004276">
    <property type="entry name" value="GlycoTrans_28_N"/>
</dbReference>
<dbReference type="NCBIfam" id="TIGR01133">
    <property type="entry name" value="murG"/>
    <property type="match status" value="1"/>
</dbReference>
<dbReference type="PANTHER" id="PTHR21015:SF22">
    <property type="entry name" value="GLYCOSYLTRANSFERASE"/>
    <property type="match status" value="1"/>
</dbReference>
<dbReference type="PANTHER" id="PTHR21015">
    <property type="entry name" value="UDP-N-ACETYLGLUCOSAMINE--N-ACETYLMURAMYL-(PENTAPEPTIDE) PYROPHOSPHORYL-UNDECAPRENOL N-ACETYLGLUCOSAMINE TRANSFERASE 1"/>
    <property type="match status" value="1"/>
</dbReference>
<dbReference type="Pfam" id="PF04101">
    <property type="entry name" value="Glyco_tran_28_C"/>
    <property type="match status" value="1"/>
</dbReference>
<dbReference type="Pfam" id="PF03033">
    <property type="entry name" value="Glyco_transf_28"/>
    <property type="match status" value="1"/>
</dbReference>
<dbReference type="SUPFAM" id="SSF53756">
    <property type="entry name" value="UDP-Glycosyltransferase/glycogen phosphorylase"/>
    <property type="match status" value="1"/>
</dbReference>
<organism>
    <name type="scientific">Neisseria gonorrhoeae (strain NCCP11945)</name>
    <dbReference type="NCBI Taxonomy" id="521006"/>
    <lineage>
        <taxon>Bacteria</taxon>
        <taxon>Pseudomonadati</taxon>
        <taxon>Pseudomonadota</taxon>
        <taxon>Betaproteobacteria</taxon>
        <taxon>Neisseriales</taxon>
        <taxon>Neisseriaceae</taxon>
        <taxon>Neisseria</taxon>
    </lineage>
</organism>
<name>MURG_NEIG2</name>
<gene>
    <name evidence="1" type="primary">murG</name>
    <name type="ordered locus">NGK_1822</name>
</gene>
<sequence>MGGKTFMLMAGGTGGHIFPALAVADSLRVRGHHVIWLGSKDSMEERIVPQYGIRLETLAIKGIRGNGIKRKLMLPFTLYKTVREAQRIIRKHRVECVIGFGGFVTFPGGLAAKLLGVPIVIHEQNAVAGLSNRHLSRWAKRVLYAFPKAFSHEGGLVGNPVRADISNLPVPAERFQGREGRLKILVVGGSLGADVLNKTVPQALALLPEEVRPQMYHQSGRNKLGNLQADYDALGVKAECVEFITDMVSAYRDADLVICRAGALTIAELTAAGLGALLVPYPHAVDDHQTANARFMVQAEAGLLLPQTQLTAEKLAEILGSLNREKCLKWAENARTLALPHSADDVAEAAIACAA</sequence>
<accession>B4RQC5</accession>
<evidence type="ECO:0000255" key="1">
    <source>
        <dbReference type="HAMAP-Rule" id="MF_00033"/>
    </source>
</evidence>